<name>SYR_PARL1</name>
<evidence type="ECO:0000255" key="1">
    <source>
        <dbReference type="HAMAP-Rule" id="MF_00123"/>
    </source>
</evidence>
<gene>
    <name evidence="1" type="primary">argS</name>
    <name type="ordered locus">Plav_3022</name>
</gene>
<proteinExistence type="inferred from homology"/>
<sequence>MNIFRFFEGRVEAALRSLEEEGVLPSGLDLTRVAVEPPRDPSHGDLSTNAAMVLAKPAGMKPRELAEQLAVKLGGEEAVTEVDVAGPGFINLRLNPAFWQARIPEILRSGPAYGASDVGAGEAVNVEYVSANPTGPMHVGHVRGAVFGDALCNLLEKVGYRVCREYYINDAGGQIEVLARSAFLRYREALGEDIGQIPEGLYPGGYLKPVGQALVAAHGRSLLEKDEPEALSIVREAAVEAMMELIRGDLGVLGIVHETFFSELALHRSGFVEQTLKVLEDKGLIYIGELEPPKGEVPDDWEARPQTLFRSTEFGDDTDRALKKSDGSWTYFAPDIAYHLDKYNRGYRTLIDVWGADHSGYIKRMRAAIAGVTDGNAEFDVKICQLVRLFRNGEPVKMSKRSGDFVTLREVVDEVGKDVVRFMMLTRKNDAPLDFDFAKVMEQSRDNPVFYVQYANARIHSVLRNVAEEGTYDLSDGALANADFTLLTDEAEMALVRLMAGFPRLVEQAALAHEPHRIAFYLDDLAAAFHGLWNKGKDDHSLRFIRADHRDVTLARLALIRSAAYVIAAGLAILGVEPTEEMR</sequence>
<protein>
    <recommendedName>
        <fullName evidence="1">Arginine--tRNA ligase</fullName>
        <ecNumber evidence="1">6.1.1.19</ecNumber>
    </recommendedName>
    <alternativeName>
        <fullName evidence="1">Arginyl-tRNA synthetase</fullName>
        <shortName evidence="1">ArgRS</shortName>
    </alternativeName>
</protein>
<organism>
    <name type="scientific">Parvibaculum lavamentivorans (strain DS-1 / DSM 13023 / NCIMB 13966)</name>
    <dbReference type="NCBI Taxonomy" id="402881"/>
    <lineage>
        <taxon>Bacteria</taxon>
        <taxon>Pseudomonadati</taxon>
        <taxon>Pseudomonadota</taxon>
        <taxon>Alphaproteobacteria</taxon>
        <taxon>Hyphomicrobiales</taxon>
        <taxon>Parvibaculaceae</taxon>
        <taxon>Parvibaculum</taxon>
    </lineage>
</organism>
<accession>A7HXJ6</accession>
<dbReference type="EC" id="6.1.1.19" evidence="1"/>
<dbReference type="EMBL" id="CP000774">
    <property type="protein sequence ID" value="ABS64629.1"/>
    <property type="molecule type" value="Genomic_DNA"/>
</dbReference>
<dbReference type="RefSeq" id="WP_012111950.1">
    <property type="nucleotide sequence ID" value="NC_009719.1"/>
</dbReference>
<dbReference type="SMR" id="A7HXJ6"/>
<dbReference type="STRING" id="402881.Plav_3022"/>
<dbReference type="KEGG" id="pla:Plav_3022"/>
<dbReference type="eggNOG" id="COG0018">
    <property type="taxonomic scope" value="Bacteria"/>
</dbReference>
<dbReference type="HOGENOM" id="CLU_006406_0_1_5"/>
<dbReference type="OrthoDB" id="9803211at2"/>
<dbReference type="Proteomes" id="UP000006377">
    <property type="component" value="Chromosome"/>
</dbReference>
<dbReference type="GO" id="GO:0005737">
    <property type="term" value="C:cytoplasm"/>
    <property type="evidence" value="ECO:0007669"/>
    <property type="project" value="UniProtKB-SubCell"/>
</dbReference>
<dbReference type="GO" id="GO:0004814">
    <property type="term" value="F:arginine-tRNA ligase activity"/>
    <property type="evidence" value="ECO:0007669"/>
    <property type="project" value="UniProtKB-UniRule"/>
</dbReference>
<dbReference type="GO" id="GO:0005524">
    <property type="term" value="F:ATP binding"/>
    <property type="evidence" value="ECO:0007669"/>
    <property type="project" value="UniProtKB-UniRule"/>
</dbReference>
<dbReference type="GO" id="GO:0006420">
    <property type="term" value="P:arginyl-tRNA aminoacylation"/>
    <property type="evidence" value="ECO:0007669"/>
    <property type="project" value="UniProtKB-UniRule"/>
</dbReference>
<dbReference type="CDD" id="cd00671">
    <property type="entry name" value="ArgRS_core"/>
    <property type="match status" value="1"/>
</dbReference>
<dbReference type="FunFam" id="1.10.730.10:FF:000008">
    <property type="entry name" value="Arginine--tRNA ligase"/>
    <property type="match status" value="1"/>
</dbReference>
<dbReference type="FunFam" id="3.40.50.620:FF:000062">
    <property type="entry name" value="Arginine--tRNA ligase"/>
    <property type="match status" value="1"/>
</dbReference>
<dbReference type="Gene3D" id="3.30.1360.70">
    <property type="entry name" value="Arginyl tRNA synthetase N-terminal domain"/>
    <property type="match status" value="1"/>
</dbReference>
<dbReference type="Gene3D" id="3.40.50.620">
    <property type="entry name" value="HUPs"/>
    <property type="match status" value="1"/>
</dbReference>
<dbReference type="Gene3D" id="1.10.730.10">
    <property type="entry name" value="Isoleucyl-tRNA Synthetase, Domain 1"/>
    <property type="match status" value="1"/>
</dbReference>
<dbReference type="HAMAP" id="MF_00123">
    <property type="entry name" value="Arg_tRNA_synth"/>
    <property type="match status" value="1"/>
</dbReference>
<dbReference type="InterPro" id="IPR001412">
    <property type="entry name" value="aa-tRNA-synth_I_CS"/>
</dbReference>
<dbReference type="InterPro" id="IPR001278">
    <property type="entry name" value="Arg-tRNA-ligase"/>
</dbReference>
<dbReference type="InterPro" id="IPR005148">
    <property type="entry name" value="Arg-tRNA-synth_N"/>
</dbReference>
<dbReference type="InterPro" id="IPR036695">
    <property type="entry name" value="Arg-tRNA-synth_N_sf"/>
</dbReference>
<dbReference type="InterPro" id="IPR035684">
    <property type="entry name" value="ArgRS_core"/>
</dbReference>
<dbReference type="InterPro" id="IPR008909">
    <property type="entry name" value="DALR_anticod-bd"/>
</dbReference>
<dbReference type="InterPro" id="IPR014729">
    <property type="entry name" value="Rossmann-like_a/b/a_fold"/>
</dbReference>
<dbReference type="InterPro" id="IPR009080">
    <property type="entry name" value="tRNAsynth_Ia_anticodon-bd"/>
</dbReference>
<dbReference type="NCBIfam" id="TIGR00456">
    <property type="entry name" value="argS"/>
    <property type="match status" value="1"/>
</dbReference>
<dbReference type="PANTHER" id="PTHR11956:SF5">
    <property type="entry name" value="ARGININE--TRNA LIGASE, CYTOPLASMIC"/>
    <property type="match status" value="1"/>
</dbReference>
<dbReference type="PANTHER" id="PTHR11956">
    <property type="entry name" value="ARGINYL-TRNA SYNTHETASE"/>
    <property type="match status" value="1"/>
</dbReference>
<dbReference type="Pfam" id="PF03485">
    <property type="entry name" value="Arg_tRNA_synt_N"/>
    <property type="match status" value="1"/>
</dbReference>
<dbReference type="Pfam" id="PF05746">
    <property type="entry name" value="DALR_1"/>
    <property type="match status" value="1"/>
</dbReference>
<dbReference type="Pfam" id="PF00750">
    <property type="entry name" value="tRNA-synt_1d"/>
    <property type="match status" value="1"/>
</dbReference>
<dbReference type="PRINTS" id="PR01038">
    <property type="entry name" value="TRNASYNTHARG"/>
</dbReference>
<dbReference type="SMART" id="SM01016">
    <property type="entry name" value="Arg_tRNA_synt_N"/>
    <property type="match status" value="1"/>
</dbReference>
<dbReference type="SMART" id="SM00836">
    <property type="entry name" value="DALR_1"/>
    <property type="match status" value="1"/>
</dbReference>
<dbReference type="SUPFAM" id="SSF47323">
    <property type="entry name" value="Anticodon-binding domain of a subclass of class I aminoacyl-tRNA synthetases"/>
    <property type="match status" value="1"/>
</dbReference>
<dbReference type="SUPFAM" id="SSF55190">
    <property type="entry name" value="Arginyl-tRNA synthetase (ArgRS), N-terminal 'additional' domain"/>
    <property type="match status" value="1"/>
</dbReference>
<dbReference type="SUPFAM" id="SSF52374">
    <property type="entry name" value="Nucleotidylyl transferase"/>
    <property type="match status" value="1"/>
</dbReference>
<dbReference type="PROSITE" id="PS00178">
    <property type="entry name" value="AA_TRNA_LIGASE_I"/>
    <property type="match status" value="1"/>
</dbReference>
<comment type="catalytic activity">
    <reaction evidence="1">
        <text>tRNA(Arg) + L-arginine + ATP = L-arginyl-tRNA(Arg) + AMP + diphosphate</text>
        <dbReference type="Rhea" id="RHEA:20301"/>
        <dbReference type="Rhea" id="RHEA-COMP:9658"/>
        <dbReference type="Rhea" id="RHEA-COMP:9673"/>
        <dbReference type="ChEBI" id="CHEBI:30616"/>
        <dbReference type="ChEBI" id="CHEBI:32682"/>
        <dbReference type="ChEBI" id="CHEBI:33019"/>
        <dbReference type="ChEBI" id="CHEBI:78442"/>
        <dbReference type="ChEBI" id="CHEBI:78513"/>
        <dbReference type="ChEBI" id="CHEBI:456215"/>
        <dbReference type="EC" id="6.1.1.19"/>
    </reaction>
</comment>
<comment type="subunit">
    <text evidence="1">Monomer.</text>
</comment>
<comment type="subcellular location">
    <subcellularLocation>
        <location evidence="1">Cytoplasm</location>
    </subcellularLocation>
</comment>
<comment type="similarity">
    <text evidence="1">Belongs to the class-I aminoacyl-tRNA synthetase family.</text>
</comment>
<feature type="chain" id="PRO_1000071395" description="Arginine--tRNA ligase">
    <location>
        <begin position="1"/>
        <end position="583"/>
    </location>
</feature>
<feature type="short sequence motif" description="'HIGH' region">
    <location>
        <begin position="131"/>
        <end position="141"/>
    </location>
</feature>
<keyword id="KW-0030">Aminoacyl-tRNA synthetase</keyword>
<keyword id="KW-0067">ATP-binding</keyword>
<keyword id="KW-0963">Cytoplasm</keyword>
<keyword id="KW-0436">Ligase</keyword>
<keyword id="KW-0547">Nucleotide-binding</keyword>
<keyword id="KW-0648">Protein biosynthesis</keyword>
<keyword id="KW-1185">Reference proteome</keyword>
<reference key="1">
    <citation type="journal article" date="2011" name="Stand. Genomic Sci.">
        <title>Complete genome sequence of Parvibaculum lavamentivorans type strain (DS-1(T)).</title>
        <authorList>
            <person name="Schleheck D."/>
            <person name="Weiss M."/>
            <person name="Pitluck S."/>
            <person name="Bruce D."/>
            <person name="Land M.L."/>
            <person name="Han S."/>
            <person name="Saunders E."/>
            <person name="Tapia R."/>
            <person name="Detter C."/>
            <person name="Brettin T."/>
            <person name="Han J."/>
            <person name="Woyke T."/>
            <person name="Goodwin L."/>
            <person name="Pennacchio L."/>
            <person name="Nolan M."/>
            <person name="Cook A.M."/>
            <person name="Kjelleberg S."/>
            <person name="Thomas T."/>
        </authorList>
    </citation>
    <scope>NUCLEOTIDE SEQUENCE [LARGE SCALE GENOMIC DNA]</scope>
    <source>
        <strain>DS-1 / DSM 13023 / NCIMB 13966</strain>
    </source>
</reference>